<sequence length="199" mass="22545">MSGHTPTYASHRRNRVKLVEAHNRAGLFKERTLDLIRGGASVQDPAFVYAFTAAKEACADLNNQLRSAARIASVEQKIRDIQSKVEEQTSIQQILNTNRRYIAPDFIRGLDKTEDDNTDNIDRLEDAVGPNIEHENHTWFGEDDEALLTQWMLTTHPPTSKYLQLQDLCVPTTIPTDMNQMQPQPISKNENPPTPHTDV</sequence>
<proteinExistence type="inferred from homology"/>
<protein>
    <recommendedName>
        <fullName>Tegument protein UL14 homolog</fullName>
    </recommendedName>
</protein>
<evidence type="ECO:0000250" key="1"/>
<evidence type="ECO:0000256" key="2">
    <source>
        <dbReference type="SAM" id="MobiDB-lite"/>
    </source>
</evidence>
<evidence type="ECO:0000305" key="3"/>
<accession>Q4JQS9</accession>
<dbReference type="EMBL" id="AB097932">
    <property type="status" value="NOT_ANNOTATED_CDS"/>
    <property type="molecule type" value="Genomic_DNA"/>
</dbReference>
<dbReference type="EMBL" id="AB097933">
    <property type="status" value="NOT_ANNOTATED_CDS"/>
    <property type="molecule type" value="Genomic_DNA"/>
</dbReference>
<dbReference type="EMBL" id="DQ008354">
    <property type="protein sequence ID" value="AAY57655.1"/>
    <property type="molecule type" value="Genomic_DNA"/>
</dbReference>
<dbReference type="EMBL" id="DQ008355">
    <property type="protein sequence ID" value="AAY57726.1"/>
    <property type="molecule type" value="Genomic_DNA"/>
</dbReference>
<dbReference type="RefSeq" id="NP_040168.1">
    <property type="nucleotide sequence ID" value="NC_001348.1"/>
</dbReference>
<dbReference type="SMR" id="Q4JQS9"/>
<dbReference type="IntAct" id="Q4JQS9">
    <property type="interactions" value="4"/>
</dbReference>
<dbReference type="GeneID" id="1487720"/>
<dbReference type="KEGG" id="vg:1487720"/>
<dbReference type="Proteomes" id="UP000002603">
    <property type="component" value="Genome"/>
</dbReference>
<dbReference type="Proteomes" id="UP000008504">
    <property type="component" value="Genome"/>
</dbReference>
<dbReference type="Proteomes" id="UP000008505">
    <property type="component" value="Genome"/>
</dbReference>
<dbReference type="Proteomes" id="UP000008506">
    <property type="component" value="Genome"/>
</dbReference>
<dbReference type="GO" id="GO:0030430">
    <property type="term" value="C:host cell cytoplasm"/>
    <property type="evidence" value="ECO:0007669"/>
    <property type="project" value="UniProtKB-SubCell"/>
</dbReference>
<dbReference type="GO" id="GO:0042025">
    <property type="term" value="C:host cell nucleus"/>
    <property type="evidence" value="ECO:0007669"/>
    <property type="project" value="UniProtKB-SubCell"/>
</dbReference>
<dbReference type="GO" id="GO:0019033">
    <property type="term" value="C:viral tegument"/>
    <property type="evidence" value="ECO:0007669"/>
    <property type="project" value="UniProtKB-SubCell"/>
</dbReference>
<dbReference type="InterPro" id="IPR005207">
    <property type="entry name" value="Herpes_UL14"/>
</dbReference>
<dbReference type="Pfam" id="PF03580">
    <property type="entry name" value="Herpes_UL14"/>
    <property type="match status" value="1"/>
</dbReference>
<feature type="chain" id="PRO_0000385152" description="Tegument protein UL14 homolog">
    <location>
        <begin position="1"/>
        <end position="199"/>
    </location>
</feature>
<feature type="region of interest" description="Disordered" evidence="2">
    <location>
        <begin position="176"/>
        <end position="199"/>
    </location>
</feature>
<feature type="compositionally biased region" description="Polar residues" evidence="2">
    <location>
        <begin position="176"/>
        <end position="191"/>
    </location>
</feature>
<organismHost>
    <name type="scientific">Homo sapiens</name>
    <name type="common">Human</name>
    <dbReference type="NCBI Taxonomy" id="9606"/>
</organismHost>
<reference key="1">
    <citation type="journal article" date="2002" name="J. Virol.">
        <title>Comparison of the complete DNA sequences of the Oka varicella vaccine and its parental virus.</title>
        <authorList>
            <person name="Gomi Y."/>
            <person name="Sunamachi H."/>
            <person name="Mori Y."/>
            <person name="Nagaike K."/>
            <person name="Takahashi M."/>
            <person name="Yamanishi K."/>
        </authorList>
    </citation>
    <scope>NUCLEOTIDE SEQUENCE [LARGE SCALE GENOMIC DNA]</scope>
    <source>
        <strain>Isolate Human/Japan/P-Oka/1970</strain>
        <strain>Oka varicella vaccine Biken (V-Oka-Biken)</strain>
    </source>
</reference>
<reference key="2">
    <citation type="journal article" date="2008" name="J. Virol.">
        <title>Complete DNA sequences of two oka strain varicella-zoster virus genomes.</title>
        <authorList>
            <person name="Tillieux S.L."/>
            <person name="Halsey W.S."/>
            <person name="Thomas E.S."/>
            <person name="Voycik J.J."/>
            <person name="Sathe G.M."/>
            <person name="Vassilev V."/>
        </authorList>
    </citation>
    <scope>NUCLEOTIDE SEQUENCE [LARGE SCALE GENOMIC DNA]</scope>
    <source>
        <strain>Oka varicella vaccine VarilRix (V-Oka-GSK)</strain>
        <strain>Oka varicella vaccine Varivax (V-Oka-Merck)</strain>
    </source>
</reference>
<name>TEG3_VZVO</name>
<comment type="function">
    <text evidence="1">Contributes to the nuclear transport of the viral transcriptional activator VP16 homolog during the early phase of infection. Therefore, participates indirectly in the regulation of the immediate-early gene expression. Additionally, seems to be important for efficient nuclear targeting of capsids (By similarity).</text>
</comment>
<comment type="subcellular location">
    <subcellularLocation>
        <location evidence="1">Virion tegument</location>
    </subcellularLocation>
    <subcellularLocation>
        <location evidence="1">Host cytoplasm</location>
    </subcellularLocation>
    <subcellularLocation>
        <location evidence="1">Host nucleus</location>
    </subcellularLocation>
</comment>
<comment type="PTM">
    <text evidence="1">Phosphorylated.</text>
</comment>
<comment type="similarity">
    <text evidence="3">Belongs to the alphaherpesvirinae HHV-1 UL14 protein family.</text>
</comment>
<organism>
    <name type="scientific">Varicella-zoster virus (strain Oka vaccine)</name>
    <name type="common">HHV-3</name>
    <name type="synonym">Human herpesvirus 3</name>
    <dbReference type="NCBI Taxonomy" id="341980"/>
    <lineage>
        <taxon>Viruses</taxon>
        <taxon>Duplodnaviria</taxon>
        <taxon>Heunggongvirae</taxon>
        <taxon>Peploviricota</taxon>
        <taxon>Herviviricetes</taxon>
        <taxon>Herpesvirales</taxon>
        <taxon>Orthoherpesviridae</taxon>
        <taxon>Alphaherpesvirinae</taxon>
        <taxon>Varicellovirus</taxon>
        <taxon>Varicellovirus humanalpha3</taxon>
        <taxon>Human herpesvirus 3</taxon>
    </lineage>
</organism>
<gene>
    <name type="ORF">ORF46</name>
</gene>
<keyword id="KW-1035">Host cytoplasm</keyword>
<keyword id="KW-1048">Host nucleus</keyword>
<keyword id="KW-0946">Virion</keyword>
<keyword id="KW-0920">Virion tegument</keyword>